<dbReference type="EMBL" id="M80212">
    <property type="protein sequence ID" value="AAA25993.1"/>
    <property type="molecule type" value="Genomic_DNA"/>
</dbReference>
<dbReference type="EMBL" id="M57629">
    <property type="protein sequence ID" value="AAD13624.1"/>
    <property type="molecule type" value="Genomic_DNA"/>
</dbReference>
<dbReference type="PIR" id="A38861">
    <property type="entry name" value="A38861"/>
</dbReference>
<dbReference type="SMR" id="P27102"/>
<dbReference type="GO" id="GO:0032993">
    <property type="term" value="C:protein-DNA complex"/>
    <property type="evidence" value="ECO:0007669"/>
    <property type="project" value="TreeGrafter"/>
</dbReference>
<dbReference type="GO" id="GO:0003677">
    <property type="term" value="F:DNA binding"/>
    <property type="evidence" value="ECO:0007669"/>
    <property type="project" value="UniProtKB-KW"/>
</dbReference>
<dbReference type="GO" id="GO:0003700">
    <property type="term" value="F:DNA-binding transcription factor activity"/>
    <property type="evidence" value="ECO:0007669"/>
    <property type="project" value="InterPro"/>
</dbReference>
<dbReference type="GO" id="GO:0009056">
    <property type="term" value="P:catabolic process"/>
    <property type="evidence" value="ECO:0007669"/>
    <property type="project" value="UniProtKB-KW"/>
</dbReference>
<dbReference type="CDD" id="cd08486">
    <property type="entry name" value="PBP2_CbnR"/>
    <property type="match status" value="1"/>
</dbReference>
<dbReference type="FunFam" id="1.10.10.10:FF:000001">
    <property type="entry name" value="LysR family transcriptional regulator"/>
    <property type="match status" value="1"/>
</dbReference>
<dbReference type="Gene3D" id="3.40.190.10">
    <property type="entry name" value="Periplasmic binding protein-like II"/>
    <property type="match status" value="2"/>
</dbReference>
<dbReference type="Gene3D" id="1.10.10.10">
    <property type="entry name" value="Winged helix-like DNA-binding domain superfamily/Winged helix DNA-binding domain"/>
    <property type="match status" value="1"/>
</dbReference>
<dbReference type="InterPro" id="IPR005119">
    <property type="entry name" value="LysR_subst-bd"/>
</dbReference>
<dbReference type="InterPro" id="IPR000847">
    <property type="entry name" value="Tscrpt_reg_HTH_LysR"/>
</dbReference>
<dbReference type="InterPro" id="IPR036388">
    <property type="entry name" value="WH-like_DNA-bd_sf"/>
</dbReference>
<dbReference type="InterPro" id="IPR036390">
    <property type="entry name" value="WH_DNA-bd_sf"/>
</dbReference>
<dbReference type="PANTHER" id="PTHR30346:SF28">
    <property type="entry name" value="HTH-TYPE TRANSCRIPTIONAL REGULATOR CYNR"/>
    <property type="match status" value="1"/>
</dbReference>
<dbReference type="PANTHER" id="PTHR30346">
    <property type="entry name" value="TRANSCRIPTIONAL DUAL REGULATOR HCAR-RELATED"/>
    <property type="match status" value="1"/>
</dbReference>
<dbReference type="Pfam" id="PF00126">
    <property type="entry name" value="HTH_1"/>
    <property type="match status" value="1"/>
</dbReference>
<dbReference type="Pfam" id="PF03466">
    <property type="entry name" value="LysR_substrate"/>
    <property type="match status" value="1"/>
</dbReference>
<dbReference type="PRINTS" id="PR00039">
    <property type="entry name" value="HTHLYSR"/>
</dbReference>
<dbReference type="SUPFAM" id="SSF53850">
    <property type="entry name" value="Periplasmic binding protein-like II"/>
    <property type="match status" value="1"/>
</dbReference>
<dbReference type="SUPFAM" id="SSF46785">
    <property type="entry name" value="Winged helix' DNA-binding domain"/>
    <property type="match status" value="1"/>
</dbReference>
<dbReference type="PROSITE" id="PS50931">
    <property type="entry name" value="HTH_LYSR"/>
    <property type="match status" value="1"/>
</dbReference>
<evidence type="ECO:0000255" key="1">
    <source>
        <dbReference type="PROSITE-ProRule" id="PRU00253"/>
    </source>
</evidence>
<evidence type="ECO:0000305" key="2"/>
<gene>
    <name type="primary">tcbR</name>
</gene>
<sequence length="294" mass="32025">MEFRQLKYFIAVAEAGNMAAAAKRLHVSQPPITRQMQALEADLGVVLLERSHRGIELTAAGHAFLEDARRILELAGRSGDRSRAAARGDVGELSVAYFGTPIYRSLPLLLRAFLTSTPTATVSLTHMTKDEQVEGLLAGTIHVGFSRFFPRHPGIEIVNIAQEDLYLAVHRSQSGKFGKTCKLADLRAVELTLFPRGGRPSFADEVIGLFKHAGIEPRIARVVEDATAALALTMAGAASSIVPASVAAIRWPDIAFARIVGTRVKVPISCTFRKEKQPPILARFVEHVRRSAKD</sequence>
<keyword id="KW-0010">Activator</keyword>
<keyword id="KW-0058">Aromatic hydrocarbons catabolism</keyword>
<keyword id="KW-0238">DNA-binding</keyword>
<keyword id="KW-0614">Plasmid</keyword>
<keyword id="KW-0804">Transcription</keyword>
<keyword id="KW-0805">Transcription regulation</keyword>
<name>TCBR_PSESQ</name>
<comment type="function">
    <text>Involved in regulation of chlorinated catechol metabolism. Transcriptional activator of the tcbCDEF chlorocatechol oxidative operon. May bind 2-chloromuconate as an inducer.</text>
</comment>
<comment type="similarity">
    <text evidence="2">Belongs to the LysR transcriptional regulatory family.</text>
</comment>
<organism>
    <name type="scientific">Pseudomonas sp. (strain P51)</name>
    <dbReference type="NCBI Taxonomy" id="65067"/>
    <lineage>
        <taxon>Bacteria</taxon>
        <taxon>Pseudomonadati</taxon>
        <taxon>Pseudomonadota</taxon>
        <taxon>Gammaproteobacteria</taxon>
        <taxon>Pseudomonadales</taxon>
        <taxon>Pseudomonadaceae</taxon>
        <taxon>Pseudomonas</taxon>
    </lineage>
</organism>
<geneLocation type="plasmid">
    <name>pP51</name>
</geneLocation>
<protein>
    <recommendedName>
        <fullName>HTH-type transcriptional regulator TcbR</fullName>
    </recommendedName>
    <alternativeName>
        <fullName>TcbCDEF operon positive regulator</fullName>
    </alternativeName>
</protein>
<feature type="chain" id="PRO_0000105756" description="HTH-type transcriptional regulator TcbR">
    <location>
        <begin position="1"/>
        <end position="294"/>
    </location>
</feature>
<feature type="domain" description="HTH lysR-type" evidence="1">
    <location>
        <begin position="1"/>
        <end position="58"/>
    </location>
</feature>
<feature type="DNA-binding region" description="H-T-H motif" evidence="1">
    <location>
        <begin position="18"/>
        <end position="37"/>
    </location>
</feature>
<reference key="1">
    <citation type="journal article" date="1991" name="J. Bacteriol.">
        <title>Characterization of the Pseudomonas sp. strain P51 gene tcbR, a LysR-type transcriptional activator of the tcbCDEF chlorocatechol oxidative operon, and analysis of the regulatory region.</title>
        <authorList>
            <person name="van der Meer J.R."/>
            <person name="Frijters A.C."/>
            <person name="Leveau J.H."/>
            <person name="Eggen R.I."/>
            <person name="Zehnder A.J."/>
            <person name="de Vos W.M."/>
        </authorList>
    </citation>
    <scope>NUCLEOTIDE SEQUENCE [GENOMIC DNA]</scope>
</reference>
<accession>P27102</accession>
<proteinExistence type="inferred from homology"/>